<accession>Q8DGW0</accession>
<sequence>MPESAAAPIHLPKTSESERLKRIRHTTSHILAMAVQKLFPKAQVTIGPWIENGFYYDFDHPEPFSEKDLRLIEKEMVKIIKRKLPVIREEVTREEAERRIRALGEPYKLEILQDLEEPITIYHLGDEWWDLCAGPHVENTGEIDPKAIALESVAGAYWRGDETKAQLQRIYGTAWETPEQLAEYKRRKEEALRRDHRKVGKELGLFIFADPVGPGLPLWTPRGTVLRSTLEDFLKKEQLKRGYLPVVTPHIARVDLFKTSGHWQKYKEDMFPLMAEDAEAAAHEQGFVLKPMNCPFHIQIYKSELRSYRDLPLRLAEFGTVYRYEQSGELGGLTRVRGFTVDDSHLFVTPEQLDAEFLNVVDLILTVFRCLRLNKFKARLSFRDPKSDKYIGSDEAWSKAEAAIQRAVEQLGMEHFLGIGEAAFYGPKLDFIFEDALGREWQLGTVQVDYNLPERFDLEYVAEDNTRRRPVMIHRAPFGSLERLIGILIEEYAGDFPFWLAPEQVRLLPVGDEQRPYAERVAAQLRERGVRVSVDRSGDRLGKQIRNAETQKIPVMGIIGAKEVEHETVSIRTRAAGDVGTFALEHLIAKLTSAMAAIHGDIDWS</sequence>
<feature type="chain" id="PRO_0000101069" description="Threonine--tRNA ligase">
    <location>
        <begin position="1"/>
        <end position="605"/>
    </location>
</feature>
<feature type="region of interest" description="Catalytic" evidence="1">
    <location>
        <begin position="195"/>
        <end position="497"/>
    </location>
</feature>
<feature type="binding site" evidence="1">
    <location>
        <position position="294"/>
    </location>
    <ligand>
        <name>Zn(2+)</name>
        <dbReference type="ChEBI" id="CHEBI:29105"/>
    </ligand>
</feature>
<feature type="binding site" evidence="1">
    <location>
        <position position="345"/>
    </location>
    <ligand>
        <name>Zn(2+)</name>
        <dbReference type="ChEBI" id="CHEBI:29105"/>
    </ligand>
</feature>
<feature type="binding site" evidence="1">
    <location>
        <position position="474"/>
    </location>
    <ligand>
        <name>Zn(2+)</name>
        <dbReference type="ChEBI" id="CHEBI:29105"/>
    </ligand>
</feature>
<evidence type="ECO:0000255" key="1">
    <source>
        <dbReference type="HAMAP-Rule" id="MF_00184"/>
    </source>
</evidence>
<name>SYT_THEVB</name>
<gene>
    <name evidence="1" type="primary">thrS</name>
    <name type="ordered locus">tll2202</name>
</gene>
<organism>
    <name type="scientific">Thermosynechococcus vestitus (strain NIES-2133 / IAM M-273 / BP-1)</name>
    <dbReference type="NCBI Taxonomy" id="197221"/>
    <lineage>
        <taxon>Bacteria</taxon>
        <taxon>Bacillati</taxon>
        <taxon>Cyanobacteriota</taxon>
        <taxon>Cyanophyceae</taxon>
        <taxon>Acaryochloridales</taxon>
        <taxon>Thermosynechococcaceae</taxon>
        <taxon>Thermosynechococcus</taxon>
    </lineage>
</organism>
<keyword id="KW-0030">Aminoacyl-tRNA synthetase</keyword>
<keyword id="KW-0067">ATP-binding</keyword>
<keyword id="KW-0963">Cytoplasm</keyword>
<keyword id="KW-0436">Ligase</keyword>
<keyword id="KW-0479">Metal-binding</keyword>
<keyword id="KW-0547">Nucleotide-binding</keyword>
<keyword id="KW-0648">Protein biosynthesis</keyword>
<keyword id="KW-1185">Reference proteome</keyword>
<keyword id="KW-0694">RNA-binding</keyword>
<keyword id="KW-0820">tRNA-binding</keyword>
<keyword id="KW-0862">Zinc</keyword>
<protein>
    <recommendedName>
        <fullName evidence="1">Threonine--tRNA ligase</fullName>
        <ecNumber evidence="1">6.1.1.3</ecNumber>
    </recommendedName>
    <alternativeName>
        <fullName evidence="1">Threonyl-tRNA synthetase</fullName>
        <shortName evidence="1">ThrRS</shortName>
    </alternativeName>
</protein>
<proteinExistence type="inferred from homology"/>
<reference key="1">
    <citation type="journal article" date="2002" name="DNA Res.">
        <title>Complete genome structure of the thermophilic cyanobacterium Thermosynechococcus elongatus BP-1.</title>
        <authorList>
            <person name="Nakamura Y."/>
            <person name="Kaneko T."/>
            <person name="Sato S."/>
            <person name="Ikeuchi M."/>
            <person name="Katoh H."/>
            <person name="Sasamoto S."/>
            <person name="Watanabe A."/>
            <person name="Iriguchi M."/>
            <person name="Kawashima K."/>
            <person name="Kimura T."/>
            <person name="Kishida Y."/>
            <person name="Kiyokawa C."/>
            <person name="Kohara M."/>
            <person name="Matsumoto M."/>
            <person name="Matsuno A."/>
            <person name="Nakazaki N."/>
            <person name="Shimpo S."/>
            <person name="Sugimoto M."/>
            <person name="Takeuchi C."/>
            <person name="Yamada M."/>
            <person name="Tabata S."/>
        </authorList>
    </citation>
    <scope>NUCLEOTIDE SEQUENCE [LARGE SCALE GENOMIC DNA]</scope>
    <source>
        <strain>NIES-2133 / IAM M-273 / BP-1</strain>
    </source>
</reference>
<comment type="function">
    <text evidence="1">Catalyzes the attachment of threonine to tRNA(Thr) in a two-step reaction: L-threonine is first activated by ATP to form Thr-AMP and then transferred to the acceptor end of tRNA(Thr). Also edits incorrectly charged L-seryl-tRNA(Thr).</text>
</comment>
<comment type="catalytic activity">
    <reaction evidence="1">
        <text>tRNA(Thr) + L-threonine + ATP = L-threonyl-tRNA(Thr) + AMP + diphosphate + H(+)</text>
        <dbReference type="Rhea" id="RHEA:24624"/>
        <dbReference type="Rhea" id="RHEA-COMP:9670"/>
        <dbReference type="Rhea" id="RHEA-COMP:9704"/>
        <dbReference type="ChEBI" id="CHEBI:15378"/>
        <dbReference type="ChEBI" id="CHEBI:30616"/>
        <dbReference type="ChEBI" id="CHEBI:33019"/>
        <dbReference type="ChEBI" id="CHEBI:57926"/>
        <dbReference type="ChEBI" id="CHEBI:78442"/>
        <dbReference type="ChEBI" id="CHEBI:78534"/>
        <dbReference type="ChEBI" id="CHEBI:456215"/>
        <dbReference type="EC" id="6.1.1.3"/>
    </reaction>
</comment>
<comment type="cofactor">
    <cofactor evidence="1">
        <name>Zn(2+)</name>
        <dbReference type="ChEBI" id="CHEBI:29105"/>
    </cofactor>
    <text evidence="1">Binds 1 zinc ion per subunit.</text>
</comment>
<comment type="subunit">
    <text evidence="1">Homodimer.</text>
</comment>
<comment type="subcellular location">
    <subcellularLocation>
        <location evidence="1">Cytoplasm</location>
    </subcellularLocation>
</comment>
<comment type="similarity">
    <text evidence="1">Belongs to the class-II aminoacyl-tRNA synthetase family.</text>
</comment>
<dbReference type="EC" id="6.1.1.3" evidence="1"/>
<dbReference type="EMBL" id="BA000039">
    <property type="protein sequence ID" value="BAC09754.1"/>
    <property type="molecule type" value="Genomic_DNA"/>
</dbReference>
<dbReference type="RefSeq" id="NP_682992.1">
    <property type="nucleotide sequence ID" value="NC_004113.1"/>
</dbReference>
<dbReference type="RefSeq" id="WP_011058036.1">
    <property type="nucleotide sequence ID" value="NC_004113.1"/>
</dbReference>
<dbReference type="SMR" id="Q8DGW0"/>
<dbReference type="STRING" id="197221.gene:10748813"/>
<dbReference type="EnsemblBacteria" id="BAC09754">
    <property type="protein sequence ID" value="BAC09754"/>
    <property type="gene ID" value="BAC09754"/>
</dbReference>
<dbReference type="KEGG" id="tel:tll2202"/>
<dbReference type="PATRIC" id="fig|197221.4.peg.2310"/>
<dbReference type="eggNOG" id="COG0441">
    <property type="taxonomic scope" value="Bacteria"/>
</dbReference>
<dbReference type="Proteomes" id="UP000000440">
    <property type="component" value="Chromosome"/>
</dbReference>
<dbReference type="GO" id="GO:0005737">
    <property type="term" value="C:cytoplasm"/>
    <property type="evidence" value="ECO:0007669"/>
    <property type="project" value="UniProtKB-SubCell"/>
</dbReference>
<dbReference type="GO" id="GO:0005524">
    <property type="term" value="F:ATP binding"/>
    <property type="evidence" value="ECO:0007669"/>
    <property type="project" value="UniProtKB-UniRule"/>
</dbReference>
<dbReference type="GO" id="GO:0046872">
    <property type="term" value="F:metal ion binding"/>
    <property type="evidence" value="ECO:0007669"/>
    <property type="project" value="UniProtKB-KW"/>
</dbReference>
<dbReference type="GO" id="GO:0004829">
    <property type="term" value="F:threonine-tRNA ligase activity"/>
    <property type="evidence" value="ECO:0007669"/>
    <property type="project" value="UniProtKB-UniRule"/>
</dbReference>
<dbReference type="GO" id="GO:0000049">
    <property type="term" value="F:tRNA binding"/>
    <property type="evidence" value="ECO:0007669"/>
    <property type="project" value="UniProtKB-KW"/>
</dbReference>
<dbReference type="GO" id="GO:0006435">
    <property type="term" value="P:threonyl-tRNA aminoacylation"/>
    <property type="evidence" value="ECO:0007669"/>
    <property type="project" value="UniProtKB-UniRule"/>
</dbReference>
<dbReference type="CDD" id="cd00860">
    <property type="entry name" value="ThrRS_anticodon"/>
    <property type="match status" value="1"/>
</dbReference>
<dbReference type="CDD" id="cd00771">
    <property type="entry name" value="ThrRS_core"/>
    <property type="match status" value="1"/>
</dbReference>
<dbReference type="FunFam" id="3.30.54.20:FF:000002">
    <property type="entry name" value="Threonine--tRNA ligase"/>
    <property type="match status" value="1"/>
</dbReference>
<dbReference type="FunFam" id="3.30.930.10:FF:000002">
    <property type="entry name" value="Threonine--tRNA ligase"/>
    <property type="match status" value="1"/>
</dbReference>
<dbReference type="FunFam" id="3.40.50.800:FF:000001">
    <property type="entry name" value="Threonine--tRNA ligase"/>
    <property type="match status" value="1"/>
</dbReference>
<dbReference type="Gene3D" id="3.30.54.20">
    <property type="match status" value="1"/>
</dbReference>
<dbReference type="Gene3D" id="3.40.50.800">
    <property type="entry name" value="Anticodon-binding domain"/>
    <property type="match status" value="1"/>
</dbReference>
<dbReference type="Gene3D" id="3.30.930.10">
    <property type="entry name" value="Bira Bifunctional Protein, Domain 2"/>
    <property type="match status" value="1"/>
</dbReference>
<dbReference type="Gene3D" id="3.30.980.10">
    <property type="entry name" value="Threonyl-trna Synthetase, Chain A, domain 2"/>
    <property type="match status" value="1"/>
</dbReference>
<dbReference type="HAMAP" id="MF_00184">
    <property type="entry name" value="Thr_tRNA_synth"/>
    <property type="match status" value="1"/>
</dbReference>
<dbReference type="InterPro" id="IPR002314">
    <property type="entry name" value="aa-tRNA-synt_IIb"/>
</dbReference>
<dbReference type="InterPro" id="IPR006195">
    <property type="entry name" value="aa-tRNA-synth_II"/>
</dbReference>
<dbReference type="InterPro" id="IPR045864">
    <property type="entry name" value="aa-tRNA-synth_II/BPL/LPL"/>
</dbReference>
<dbReference type="InterPro" id="IPR004154">
    <property type="entry name" value="Anticodon-bd"/>
</dbReference>
<dbReference type="InterPro" id="IPR036621">
    <property type="entry name" value="Anticodon-bd_dom_sf"/>
</dbReference>
<dbReference type="InterPro" id="IPR002320">
    <property type="entry name" value="Thr-tRNA-ligase_IIa"/>
</dbReference>
<dbReference type="InterPro" id="IPR018163">
    <property type="entry name" value="Thr/Ala-tRNA-synth_IIc_edit"/>
</dbReference>
<dbReference type="InterPro" id="IPR047246">
    <property type="entry name" value="ThrRS_anticodon"/>
</dbReference>
<dbReference type="InterPro" id="IPR033728">
    <property type="entry name" value="ThrRS_core"/>
</dbReference>
<dbReference type="InterPro" id="IPR012947">
    <property type="entry name" value="tRNA_SAD"/>
</dbReference>
<dbReference type="NCBIfam" id="TIGR00418">
    <property type="entry name" value="thrS"/>
    <property type="match status" value="1"/>
</dbReference>
<dbReference type="PANTHER" id="PTHR11451:SF44">
    <property type="entry name" value="THREONINE--TRNA LIGASE, CHLOROPLASTIC_MITOCHONDRIAL 2"/>
    <property type="match status" value="1"/>
</dbReference>
<dbReference type="PANTHER" id="PTHR11451">
    <property type="entry name" value="THREONINE-TRNA LIGASE"/>
    <property type="match status" value="1"/>
</dbReference>
<dbReference type="Pfam" id="PF03129">
    <property type="entry name" value="HGTP_anticodon"/>
    <property type="match status" value="1"/>
</dbReference>
<dbReference type="Pfam" id="PF00587">
    <property type="entry name" value="tRNA-synt_2b"/>
    <property type="match status" value="1"/>
</dbReference>
<dbReference type="Pfam" id="PF07973">
    <property type="entry name" value="tRNA_SAD"/>
    <property type="match status" value="1"/>
</dbReference>
<dbReference type="PRINTS" id="PR01047">
    <property type="entry name" value="TRNASYNTHTHR"/>
</dbReference>
<dbReference type="SMART" id="SM00863">
    <property type="entry name" value="tRNA_SAD"/>
    <property type="match status" value="1"/>
</dbReference>
<dbReference type="SUPFAM" id="SSF52954">
    <property type="entry name" value="Class II aaRS ABD-related"/>
    <property type="match status" value="1"/>
</dbReference>
<dbReference type="SUPFAM" id="SSF55681">
    <property type="entry name" value="Class II aaRS and biotin synthetases"/>
    <property type="match status" value="1"/>
</dbReference>
<dbReference type="SUPFAM" id="SSF55186">
    <property type="entry name" value="ThrRS/AlaRS common domain"/>
    <property type="match status" value="1"/>
</dbReference>
<dbReference type="PROSITE" id="PS50862">
    <property type="entry name" value="AA_TRNA_LIGASE_II"/>
    <property type="match status" value="1"/>
</dbReference>